<protein>
    <recommendedName>
        <fullName evidence="1">Chaperonin GroEL</fullName>
        <ecNumber evidence="1">5.6.1.7</ecNumber>
    </recommendedName>
    <alternativeName>
        <fullName evidence="1">60 kDa chaperonin</fullName>
    </alternativeName>
    <alternativeName>
        <fullName evidence="1">Chaperonin-60</fullName>
        <shortName evidence="1">Cpn60</shortName>
    </alternativeName>
</protein>
<reference key="1">
    <citation type="journal article" date="2009" name="J. Bacteriol.">
        <title>Genome sequences of three Agrobacterium biovars help elucidate the evolution of multichromosome genomes in bacteria.</title>
        <authorList>
            <person name="Slater S.C."/>
            <person name="Goldman B.S."/>
            <person name="Goodner B."/>
            <person name="Setubal J.C."/>
            <person name="Farrand S.K."/>
            <person name="Nester E.W."/>
            <person name="Burr T.J."/>
            <person name="Banta L."/>
            <person name="Dickerman A.W."/>
            <person name="Paulsen I."/>
            <person name="Otten L."/>
            <person name="Suen G."/>
            <person name="Welch R."/>
            <person name="Almeida N.F."/>
            <person name="Arnold F."/>
            <person name="Burton O.T."/>
            <person name="Du Z."/>
            <person name="Ewing A."/>
            <person name="Godsy E."/>
            <person name="Heisel S."/>
            <person name="Houmiel K.L."/>
            <person name="Jhaveri J."/>
            <person name="Lu J."/>
            <person name="Miller N.M."/>
            <person name="Norton S."/>
            <person name="Chen Q."/>
            <person name="Phoolcharoen W."/>
            <person name="Ohlin V."/>
            <person name="Ondrusek D."/>
            <person name="Pride N."/>
            <person name="Stricklin S.L."/>
            <person name="Sun J."/>
            <person name="Wheeler C."/>
            <person name="Wilson L."/>
            <person name="Zhu H."/>
            <person name="Wood D.W."/>
        </authorList>
    </citation>
    <scope>NUCLEOTIDE SEQUENCE [LARGE SCALE GENOMIC DNA]</scope>
    <source>
        <strain>ATCC BAA-846 / DSM 112012 / S4</strain>
    </source>
</reference>
<dbReference type="EC" id="5.6.1.7" evidence="1"/>
<dbReference type="EMBL" id="CP000634">
    <property type="protein sequence ID" value="ACM38886.1"/>
    <property type="molecule type" value="Genomic_DNA"/>
</dbReference>
<dbReference type="RefSeq" id="WP_012654128.1">
    <property type="nucleotide sequence ID" value="NC_011988.1"/>
</dbReference>
<dbReference type="SMR" id="B9K1Y8"/>
<dbReference type="STRING" id="311402.Avi_5830"/>
<dbReference type="KEGG" id="avi:Avi_5830"/>
<dbReference type="eggNOG" id="COG0459">
    <property type="taxonomic scope" value="Bacteria"/>
</dbReference>
<dbReference type="HOGENOM" id="CLU_016503_3_0_5"/>
<dbReference type="Proteomes" id="UP000001596">
    <property type="component" value="Chromosome 2"/>
</dbReference>
<dbReference type="GO" id="GO:0005737">
    <property type="term" value="C:cytoplasm"/>
    <property type="evidence" value="ECO:0007669"/>
    <property type="project" value="UniProtKB-SubCell"/>
</dbReference>
<dbReference type="GO" id="GO:0005524">
    <property type="term" value="F:ATP binding"/>
    <property type="evidence" value="ECO:0007669"/>
    <property type="project" value="UniProtKB-UniRule"/>
</dbReference>
<dbReference type="GO" id="GO:0140662">
    <property type="term" value="F:ATP-dependent protein folding chaperone"/>
    <property type="evidence" value="ECO:0007669"/>
    <property type="project" value="InterPro"/>
</dbReference>
<dbReference type="GO" id="GO:0016853">
    <property type="term" value="F:isomerase activity"/>
    <property type="evidence" value="ECO:0007669"/>
    <property type="project" value="UniProtKB-KW"/>
</dbReference>
<dbReference type="GO" id="GO:0051082">
    <property type="term" value="F:unfolded protein binding"/>
    <property type="evidence" value="ECO:0007669"/>
    <property type="project" value="UniProtKB-UniRule"/>
</dbReference>
<dbReference type="GO" id="GO:0042026">
    <property type="term" value="P:protein refolding"/>
    <property type="evidence" value="ECO:0007669"/>
    <property type="project" value="UniProtKB-UniRule"/>
</dbReference>
<dbReference type="CDD" id="cd03344">
    <property type="entry name" value="GroEL"/>
    <property type="match status" value="1"/>
</dbReference>
<dbReference type="FunFam" id="1.10.560.10:FF:000001">
    <property type="entry name" value="60 kDa chaperonin"/>
    <property type="match status" value="1"/>
</dbReference>
<dbReference type="FunFam" id="3.50.7.10:FF:000001">
    <property type="entry name" value="60 kDa chaperonin"/>
    <property type="match status" value="1"/>
</dbReference>
<dbReference type="Gene3D" id="3.50.7.10">
    <property type="entry name" value="GroEL"/>
    <property type="match status" value="1"/>
</dbReference>
<dbReference type="Gene3D" id="1.10.560.10">
    <property type="entry name" value="GroEL-like equatorial domain"/>
    <property type="match status" value="1"/>
</dbReference>
<dbReference type="Gene3D" id="3.30.260.10">
    <property type="entry name" value="TCP-1-like chaperonin intermediate domain"/>
    <property type="match status" value="1"/>
</dbReference>
<dbReference type="HAMAP" id="MF_00600">
    <property type="entry name" value="CH60"/>
    <property type="match status" value="1"/>
</dbReference>
<dbReference type="InterPro" id="IPR018370">
    <property type="entry name" value="Chaperonin_Cpn60_CS"/>
</dbReference>
<dbReference type="InterPro" id="IPR001844">
    <property type="entry name" value="Cpn60/GroEL"/>
</dbReference>
<dbReference type="InterPro" id="IPR002423">
    <property type="entry name" value="Cpn60/GroEL/TCP-1"/>
</dbReference>
<dbReference type="InterPro" id="IPR027409">
    <property type="entry name" value="GroEL-like_apical_dom_sf"/>
</dbReference>
<dbReference type="InterPro" id="IPR027413">
    <property type="entry name" value="GROEL-like_equatorial_sf"/>
</dbReference>
<dbReference type="InterPro" id="IPR027410">
    <property type="entry name" value="TCP-1-like_intermed_sf"/>
</dbReference>
<dbReference type="NCBIfam" id="TIGR02348">
    <property type="entry name" value="GroEL"/>
    <property type="match status" value="1"/>
</dbReference>
<dbReference type="NCBIfam" id="NF000592">
    <property type="entry name" value="PRK00013.1"/>
    <property type="match status" value="1"/>
</dbReference>
<dbReference type="NCBIfam" id="NF009487">
    <property type="entry name" value="PRK12849.1"/>
    <property type="match status" value="1"/>
</dbReference>
<dbReference type="NCBIfam" id="NF009488">
    <property type="entry name" value="PRK12850.1"/>
    <property type="match status" value="1"/>
</dbReference>
<dbReference type="NCBIfam" id="NF009489">
    <property type="entry name" value="PRK12851.1"/>
    <property type="match status" value="1"/>
</dbReference>
<dbReference type="PANTHER" id="PTHR45633">
    <property type="entry name" value="60 KDA HEAT SHOCK PROTEIN, MITOCHONDRIAL"/>
    <property type="match status" value="1"/>
</dbReference>
<dbReference type="Pfam" id="PF00118">
    <property type="entry name" value="Cpn60_TCP1"/>
    <property type="match status" value="1"/>
</dbReference>
<dbReference type="PRINTS" id="PR00298">
    <property type="entry name" value="CHAPERONIN60"/>
</dbReference>
<dbReference type="SUPFAM" id="SSF52029">
    <property type="entry name" value="GroEL apical domain-like"/>
    <property type="match status" value="1"/>
</dbReference>
<dbReference type="SUPFAM" id="SSF48592">
    <property type="entry name" value="GroEL equatorial domain-like"/>
    <property type="match status" value="1"/>
</dbReference>
<dbReference type="SUPFAM" id="SSF54849">
    <property type="entry name" value="GroEL-intermediate domain like"/>
    <property type="match status" value="1"/>
</dbReference>
<dbReference type="PROSITE" id="PS00296">
    <property type="entry name" value="CHAPERONINS_CPN60"/>
    <property type="match status" value="1"/>
</dbReference>
<keyword id="KW-0067">ATP-binding</keyword>
<keyword id="KW-0143">Chaperone</keyword>
<keyword id="KW-0963">Cytoplasm</keyword>
<keyword id="KW-0413">Isomerase</keyword>
<keyword id="KW-0547">Nucleotide-binding</keyword>
<keyword id="KW-1185">Reference proteome</keyword>
<sequence length="547" mass="57853">MAAKEIKFGRTAREKMLHGVDILADAVKVTLGPKGRNVIIDKSFGAPRITKDGVSVAKEIELEDKFENMGAQMVREVASKTNDIAGDGTTTATVLAQAIVREGNKAVAAGMNPMDLKRGIDLAVAEVVKDLQAKAKKISTSEEVAQVGTISANGDTQVGKDIAEAMQKVGNEGVITVEEAKTAETELEVVEGMQFDRGYLSPYFVTNPEKMVADLEDAYVLLHEKKLSNLQAMLPVLEAVVQTGKPLVIIAEDVEGEALATLVVNKLRGGLKIAAVKAPGFGDRRKAMLEDIAILTGGTVISEDLGIKLETVTLDMLGRAKKISITKENTTIVDGAGQKSDIEGRVAQIKAQIEETSSDYDREKLQERLAKLAGGVAVIRVGGSTEIEVKERKDRIDDALNATRAAVQEGIVPGGGTALLRSSTKITVKGVNDDQEAGINIVRRALQSLVRQIATNAGDEASIIVGKILDKDNDNYGYNAQTGEFGDMIAMGIVDPVKVVRTALQNAASVASLLITTEAMIAELPKKDSAGGGMPDMGGMGGMGGMM</sequence>
<organism>
    <name type="scientific">Allorhizobium ampelinum (strain ATCC BAA-846 / DSM 112012 / S4)</name>
    <name type="common">Agrobacterium vitis (strain S4)</name>
    <dbReference type="NCBI Taxonomy" id="311402"/>
    <lineage>
        <taxon>Bacteria</taxon>
        <taxon>Pseudomonadati</taxon>
        <taxon>Pseudomonadota</taxon>
        <taxon>Alphaproteobacteria</taxon>
        <taxon>Hyphomicrobiales</taxon>
        <taxon>Rhizobiaceae</taxon>
        <taxon>Rhizobium/Agrobacterium group</taxon>
        <taxon>Allorhizobium</taxon>
        <taxon>Allorhizobium ampelinum</taxon>
    </lineage>
</organism>
<evidence type="ECO:0000255" key="1">
    <source>
        <dbReference type="HAMAP-Rule" id="MF_00600"/>
    </source>
</evidence>
<comment type="function">
    <text evidence="1">Together with its co-chaperonin GroES, plays an essential role in assisting protein folding. The GroEL-GroES system forms a nano-cage that allows encapsulation of the non-native substrate proteins and provides a physical environment optimized to promote and accelerate protein folding.</text>
</comment>
<comment type="catalytic activity">
    <reaction evidence="1">
        <text>ATP + H2O + a folded polypeptide = ADP + phosphate + an unfolded polypeptide.</text>
        <dbReference type="EC" id="5.6.1.7"/>
    </reaction>
</comment>
<comment type="subunit">
    <text evidence="1">Forms a cylinder of 14 subunits composed of two heptameric rings stacked back-to-back. Interacts with the co-chaperonin GroES.</text>
</comment>
<comment type="subcellular location">
    <subcellularLocation>
        <location evidence="1">Cytoplasm</location>
    </subcellularLocation>
</comment>
<comment type="similarity">
    <text evidence="1">Belongs to the chaperonin (HSP60) family.</text>
</comment>
<name>CH60_ALLAM</name>
<gene>
    <name evidence="1" type="primary">groEL</name>
    <name evidence="1" type="synonym">groL</name>
    <name type="ordered locus">Avi_5830</name>
</gene>
<accession>B9K1Y8</accession>
<proteinExistence type="inferred from homology"/>
<feature type="chain" id="PRO_1000147010" description="Chaperonin GroEL">
    <location>
        <begin position="1"/>
        <end position="547"/>
    </location>
</feature>
<feature type="binding site" evidence="1">
    <location>
        <begin position="30"/>
        <end position="33"/>
    </location>
    <ligand>
        <name>ATP</name>
        <dbReference type="ChEBI" id="CHEBI:30616"/>
    </ligand>
</feature>
<feature type="binding site" evidence="1">
    <location>
        <position position="51"/>
    </location>
    <ligand>
        <name>ATP</name>
        <dbReference type="ChEBI" id="CHEBI:30616"/>
    </ligand>
</feature>
<feature type="binding site" evidence="1">
    <location>
        <begin position="87"/>
        <end position="91"/>
    </location>
    <ligand>
        <name>ATP</name>
        <dbReference type="ChEBI" id="CHEBI:30616"/>
    </ligand>
</feature>
<feature type="binding site" evidence="1">
    <location>
        <position position="415"/>
    </location>
    <ligand>
        <name>ATP</name>
        <dbReference type="ChEBI" id="CHEBI:30616"/>
    </ligand>
</feature>
<feature type="binding site" evidence="1">
    <location>
        <position position="495"/>
    </location>
    <ligand>
        <name>ATP</name>
        <dbReference type="ChEBI" id="CHEBI:30616"/>
    </ligand>
</feature>